<name>RNH2_STRS2</name>
<reference key="1">
    <citation type="journal article" date="2007" name="PLoS ONE">
        <title>A glimpse of streptococcal toxic shock syndrome from comparative genomics of S. suis 2 Chinese isolates.</title>
        <authorList>
            <person name="Chen C."/>
            <person name="Tang J."/>
            <person name="Dong W."/>
            <person name="Wang C."/>
            <person name="Feng Y."/>
            <person name="Wang J."/>
            <person name="Zheng F."/>
            <person name="Pan X."/>
            <person name="Liu D."/>
            <person name="Li M."/>
            <person name="Song Y."/>
            <person name="Zhu X."/>
            <person name="Sun H."/>
            <person name="Feng T."/>
            <person name="Guo Z."/>
            <person name="Ju A."/>
            <person name="Ge J."/>
            <person name="Dong Y."/>
            <person name="Sun W."/>
            <person name="Jiang Y."/>
            <person name="Wang J."/>
            <person name="Yan J."/>
            <person name="Yang H."/>
            <person name="Wang X."/>
            <person name="Gao G.F."/>
            <person name="Yang R."/>
            <person name="Wang J."/>
            <person name="Yu J."/>
        </authorList>
    </citation>
    <scope>NUCLEOTIDE SEQUENCE [LARGE SCALE GENOMIC DNA]</scope>
    <source>
        <strain>98HAH33</strain>
    </source>
</reference>
<sequence length="257" mass="27912">MATIKEVTALLAQVDSLDSPVWDQLAQDERAGVQAAIKKRRKELEKEAVEDARLEAMLFYEKSLYENGVEFIAGIDEVGRGPLAGPVVAAAVILPKGCKIRYLNDSKKIPKSKHEAIYQEVMERAVAVGVGIKDAALIDEVNIYEATKLAMLEALGKLSQKPDHLLIDAMKLDTPIPQTSIIKGDANSLSIAAASIVAKVTRDKMMADYDKEFSGYGFAKNAGYGTTEHLEGLNKLGITPIHRKTFEPIKSMVAGGN</sequence>
<gene>
    <name evidence="1" type="primary">rnhB</name>
    <name type="ordered locus">SSU98_1009</name>
</gene>
<evidence type="ECO:0000255" key="1">
    <source>
        <dbReference type="HAMAP-Rule" id="MF_00052"/>
    </source>
</evidence>
<evidence type="ECO:0000255" key="2">
    <source>
        <dbReference type="PROSITE-ProRule" id="PRU01319"/>
    </source>
</evidence>
<proteinExistence type="inferred from homology"/>
<comment type="function">
    <text evidence="1">Endonuclease that specifically degrades the RNA of RNA-DNA hybrids.</text>
</comment>
<comment type="catalytic activity">
    <reaction evidence="1">
        <text>Endonucleolytic cleavage to 5'-phosphomonoester.</text>
        <dbReference type="EC" id="3.1.26.4"/>
    </reaction>
</comment>
<comment type="cofactor">
    <cofactor evidence="1">
        <name>Mn(2+)</name>
        <dbReference type="ChEBI" id="CHEBI:29035"/>
    </cofactor>
    <cofactor evidence="1">
        <name>Mg(2+)</name>
        <dbReference type="ChEBI" id="CHEBI:18420"/>
    </cofactor>
    <text evidence="1">Manganese or magnesium. Binds 1 divalent metal ion per monomer in the absence of substrate. May bind a second metal ion after substrate binding.</text>
</comment>
<comment type="subcellular location">
    <subcellularLocation>
        <location evidence="1">Cytoplasm</location>
    </subcellularLocation>
</comment>
<comment type="similarity">
    <text evidence="1">Belongs to the RNase HII family.</text>
</comment>
<dbReference type="EC" id="3.1.26.4" evidence="1"/>
<dbReference type="EMBL" id="CP000408">
    <property type="protein sequence ID" value="ABP92167.1"/>
    <property type="molecule type" value="Genomic_DNA"/>
</dbReference>
<dbReference type="SMR" id="A4W1C8"/>
<dbReference type="KEGG" id="ssv:SSU98_1009"/>
<dbReference type="HOGENOM" id="CLU_036532_2_1_9"/>
<dbReference type="GO" id="GO:0005737">
    <property type="term" value="C:cytoplasm"/>
    <property type="evidence" value="ECO:0007669"/>
    <property type="project" value="UniProtKB-SubCell"/>
</dbReference>
<dbReference type="GO" id="GO:0032299">
    <property type="term" value="C:ribonuclease H2 complex"/>
    <property type="evidence" value="ECO:0007669"/>
    <property type="project" value="TreeGrafter"/>
</dbReference>
<dbReference type="GO" id="GO:0030145">
    <property type="term" value="F:manganese ion binding"/>
    <property type="evidence" value="ECO:0007669"/>
    <property type="project" value="UniProtKB-UniRule"/>
</dbReference>
<dbReference type="GO" id="GO:0003723">
    <property type="term" value="F:RNA binding"/>
    <property type="evidence" value="ECO:0007669"/>
    <property type="project" value="InterPro"/>
</dbReference>
<dbReference type="GO" id="GO:0004523">
    <property type="term" value="F:RNA-DNA hybrid ribonuclease activity"/>
    <property type="evidence" value="ECO:0007669"/>
    <property type="project" value="UniProtKB-UniRule"/>
</dbReference>
<dbReference type="GO" id="GO:0043137">
    <property type="term" value="P:DNA replication, removal of RNA primer"/>
    <property type="evidence" value="ECO:0007669"/>
    <property type="project" value="TreeGrafter"/>
</dbReference>
<dbReference type="GO" id="GO:0006298">
    <property type="term" value="P:mismatch repair"/>
    <property type="evidence" value="ECO:0007669"/>
    <property type="project" value="TreeGrafter"/>
</dbReference>
<dbReference type="CDD" id="cd07182">
    <property type="entry name" value="RNase_HII_bacteria_HII_like"/>
    <property type="match status" value="1"/>
</dbReference>
<dbReference type="FunFam" id="3.30.420.10:FF:000006">
    <property type="entry name" value="Ribonuclease HII"/>
    <property type="match status" value="1"/>
</dbReference>
<dbReference type="Gene3D" id="3.30.420.10">
    <property type="entry name" value="Ribonuclease H-like superfamily/Ribonuclease H"/>
    <property type="match status" value="1"/>
</dbReference>
<dbReference type="HAMAP" id="MF_00052_B">
    <property type="entry name" value="RNase_HII_B"/>
    <property type="match status" value="1"/>
</dbReference>
<dbReference type="InterPro" id="IPR022898">
    <property type="entry name" value="RNase_HII"/>
</dbReference>
<dbReference type="InterPro" id="IPR001352">
    <property type="entry name" value="RNase_HII/HIII"/>
</dbReference>
<dbReference type="InterPro" id="IPR024567">
    <property type="entry name" value="RNase_HII/HIII_dom"/>
</dbReference>
<dbReference type="InterPro" id="IPR012337">
    <property type="entry name" value="RNaseH-like_sf"/>
</dbReference>
<dbReference type="InterPro" id="IPR036397">
    <property type="entry name" value="RNaseH_sf"/>
</dbReference>
<dbReference type="NCBIfam" id="NF000594">
    <property type="entry name" value="PRK00015.1-1"/>
    <property type="match status" value="1"/>
</dbReference>
<dbReference type="NCBIfam" id="NF000595">
    <property type="entry name" value="PRK00015.1-3"/>
    <property type="match status" value="1"/>
</dbReference>
<dbReference type="PANTHER" id="PTHR10954">
    <property type="entry name" value="RIBONUCLEASE H2 SUBUNIT A"/>
    <property type="match status" value="1"/>
</dbReference>
<dbReference type="PANTHER" id="PTHR10954:SF18">
    <property type="entry name" value="RIBONUCLEASE HII"/>
    <property type="match status" value="1"/>
</dbReference>
<dbReference type="Pfam" id="PF01351">
    <property type="entry name" value="RNase_HII"/>
    <property type="match status" value="1"/>
</dbReference>
<dbReference type="SUPFAM" id="SSF53098">
    <property type="entry name" value="Ribonuclease H-like"/>
    <property type="match status" value="1"/>
</dbReference>
<dbReference type="PROSITE" id="PS51975">
    <property type="entry name" value="RNASE_H_2"/>
    <property type="match status" value="1"/>
</dbReference>
<protein>
    <recommendedName>
        <fullName evidence="1">Ribonuclease HII</fullName>
        <shortName evidence="1">RNase HII</shortName>
        <ecNumber evidence="1">3.1.26.4</ecNumber>
    </recommendedName>
</protein>
<organism>
    <name type="scientific">Streptococcus suis (strain 98HAH33)</name>
    <dbReference type="NCBI Taxonomy" id="391296"/>
    <lineage>
        <taxon>Bacteria</taxon>
        <taxon>Bacillati</taxon>
        <taxon>Bacillota</taxon>
        <taxon>Bacilli</taxon>
        <taxon>Lactobacillales</taxon>
        <taxon>Streptococcaceae</taxon>
        <taxon>Streptococcus</taxon>
    </lineage>
</organism>
<accession>A4W1C8</accession>
<feature type="chain" id="PRO_1000031216" description="Ribonuclease HII">
    <location>
        <begin position="1"/>
        <end position="257"/>
    </location>
</feature>
<feature type="domain" description="RNase H type-2" evidence="2">
    <location>
        <begin position="70"/>
        <end position="257"/>
    </location>
</feature>
<feature type="binding site" evidence="1">
    <location>
        <position position="76"/>
    </location>
    <ligand>
        <name>a divalent metal cation</name>
        <dbReference type="ChEBI" id="CHEBI:60240"/>
    </ligand>
</feature>
<feature type="binding site" evidence="1">
    <location>
        <position position="77"/>
    </location>
    <ligand>
        <name>a divalent metal cation</name>
        <dbReference type="ChEBI" id="CHEBI:60240"/>
    </ligand>
</feature>
<feature type="binding site" evidence="1">
    <location>
        <position position="168"/>
    </location>
    <ligand>
        <name>a divalent metal cation</name>
        <dbReference type="ChEBI" id="CHEBI:60240"/>
    </ligand>
</feature>
<keyword id="KW-0963">Cytoplasm</keyword>
<keyword id="KW-0255">Endonuclease</keyword>
<keyword id="KW-0378">Hydrolase</keyword>
<keyword id="KW-0464">Manganese</keyword>
<keyword id="KW-0479">Metal-binding</keyword>
<keyword id="KW-0540">Nuclease</keyword>